<organism>
    <name type="scientific">Erythrobacter litoralis (strain HTCC2594)</name>
    <dbReference type="NCBI Taxonomy" id="314225"/>
    <lineage>
        <taxon>Bacteria</taxon>
        <taxon>Pseudomonadati</taxon>
        <taxon>Pseudomonadota</taxon>
        <taxon>Alphaproteobacteria</taxon>
        <taxon>Sphingomonadales</taxon>
        <taxon>Erythrobacteraceae</taxon>
        <taxon>Erythrobacter/Porphyrobacter group</taxon>
        <taxon>Erythrobacter</taxon>
    </lineage>
</organism>
<gene>
    <name evidence="1" type="primary">rpsU</name>
    <name type="ordered locus">ELI_01355</name>
</gene>
<keyword id="KW-1185">Reference proteome</keyword>
<keyword id="KW-0687">Ribonucleoprotein</keyword>
<keyword id="KW-0689">Ribosomal protein</keyword>
<comment type="similarity">
    <text evidence="1">Belongs to the bacterial ribosomal protein bS21 family.</text>
</comment>
<protein>
    <recommendedName>
        <fullName evidence="1">Small ribosomal subunit protein bS21</fullName>
    </recommendedName>
    <alternativeName>
        <fullName evidence="3">30S ribosomal protein S21</fullName>
    </alternativeName>
</protein>
<sequence length="68" mass="8339">MQIMVRDNNVDQALRALKKKLQREGVYREMKLRRHYEKPSEKRAREKAAAVRRARKMERKRMERDGIK</sequence>
<reference key="1">
    <citation type="journal article" date="2009" name="J. Bacteriol.">
        <title>Complete genome sequence of Erythrobacter litoralis HTCC2594.</title>
        <authorList>
            <person name="Oh H.M."/>
            <person name="Giovannoni S.J."/>
            <person name="Ferriera S."/>
            <person name="Johnson J."/>
            <person name="Cho J.C."/>
        </authorList>
    </citation>
    <scope>NUCLEOTIDE SEQUENCE [LARGE SCALE GENOMIC DNA]</scope>
    <source>
        <strain>HTCC2594</strain>
    </source>
</reference>
<accession>Q2ND78</accession>
<dbReference type="EMBL" id="CP000157">
    <property type="protein sequence ID" value="ABC62363.1"/>
    <property type="molecule type" value="Genomic_DNA"/>
</dbReference>
<dbReference type="RefSeq" id="WP_011413239.1">
    <property type="nucleotide sequence ID" value="NC_007722.1"/>
</dbReference>
<dbReference type="SMR" id="Q2ND78"/>
<dbReference type="STRING" id="314225.ELI_01355"/>
<dbReference type="KEGG" id="eli:ELI_01355"/>
<dbReference type="eggNOG" id="COG0828">
    <property type="taxonomic scope" value="Bacteria"/>
</dbReference>
<dbReference type="HOGENOM" id="CLU_159258_0_1_5"/>
<dbReference type="OrthoDB" id="9811907at2"/>
<dbReference type="Proteomes" id="UP000008808">
    <property type="component" value="Chromosome"/>
</dbReference>
<dbReference type="GO" id="GO:1990904">
    <property type="term" value="C:ribonucleoprotein complex"/>
    <property type="evidence" value="ECO:0007669"/>
    <property type="project" value="UniProtKB-KW"/>
</dbReference>
<dbReference type="GO" id="GO:0005840">
    <property type="term" value="C:ribosome"/>
    <property type="evidence" value="ECO:0007669"/>
    <property type="project" value="UniProtKB-KW"/>
</dbReference>
<dbReference type="GO" id="GO:0003735">
    <property type="term" value="F:structural constituent of ribosome"/>
    <property type="evidence" value="ECO:0007669"/>
    <property type="project" value="InterPro"/>
</dbReference>
<dbReference type="GO" id="GO:0006412">
    <property type="term" value="P:translation"/>
    <property type="evidence" value="ECO:0007669"/>
    <property type="project" value="UniProtKB-UniRule"/>
</dbReference>
<dbReference type="Gene3D" id="1.20.5.1150">
    <property type="entry name" value="Ribosomal protein S8"/>
    <property type="match status" value="1"/>
</dbReference>
<dbReference type="HAMAP" id="MF_00358">
    <property type="entry name" value="Ribosomal_bS21"/>
    <property type="match status" value="1"/>
</dbReference>
<dbReference type="InterPro" id="IPR001911">
    <property type="entry name" value="Ribosomal_bS21"/>
</dbReference>
<dbReference type="InterPro" id="IPR018278">
    <property type="entry name" value="Ribosomal_bS21_CS"/>
</dbReference>
<dbReference type="InterPro" id="IPR038380">
    <property type="entry name" value="Ribosomal_bS21_sf"/>
</dbReference>
<dbReference type="NCBIfam" id="TIGR00030">
    <property type="entry name" value="S21p"/>
    <property type="match status" value="1"/>
</dbReference>
<dbReference type="PANTHER" id="PTHR21109">
    <property type="entry name" value="MITOCHONDRIAL 28S RIBOSOMAL PROTEIN S21"/>
    <property type="match status" value="1"/>
</dbReference>
<dbReference type="PANTHER" id="PTHR21109:SF0">
    <property type="entry name" value="SMALL RIBOSOMAL SUBUNIT PROTEIN BS21M"/>
    <property type="match status" value="1"/>
</dbReference>
<dbReference type="Pfam" id="PF01165">
    <property type="entry name" value="Ribosomal_S21"/>
    <property type="match status" value="1"/>
</dbReference>
<dbReference type="PRINTS" id="PR00976">
    <property type="entry name" value="RIBOSOMALS21"/>
</dbReference>
<dbReference type="PROSITE" id="PS01181">
    <property type="entry name" value="RIBOSOMAL_S21"/>
    <property type="match status" value="1"/>
</dbReference>
<proteinExistence type="inferred from homology"/>
<name>RS21_ERYLH</name>
<evidence type="ECO:0000255" key="1">
    <source>
        <dbReference type="HAMAP-Rule" id="MF_00358"/>
    </source>
</evidence>
<evidence type="ECO:0000256" key="2">
    <source>
        <dbReference type="SAM" id="MobiDB-lite"/>
    </source>
</evidence>
<evidence type="ECO:0000305" key="3"/>
<feature type="chain" id="PRO_1000005116" description="Small ribosomal subunit protein bS21">
    <location>
        <begin position="1"/>
        <end position="68"/>
    </location>
</feature>
<feature type="region of interest" description="Disordered" evidence="2">
    <location>
        <begin position="37"/>
        <end position="68"/>
    </location>
</feature>
<feature type="compositionally biased region" description="Basic and acidic residues" evidence="2">
    <location>
        <begin position="37"/>
        <end position="49"/>
    </location>
</feature>
<feature type="compositionally biased region" description="Basic residues" evidence="2">
    <location>
        <begin position="50"/>
        <end position="59"/>
    </location>
</feature>